<name>RPOA_CALS8</name>
<keyword id="KW-0240">DNA-directed RNA polymerase</keyword>
<keyword id="KW-0548">Nucleotidyltransferase</keyword>
<keyword id="KW-0804">Transcription</keyword>
<keyword id="KW-0808">Transferase</keyword>
<accession>A4XLQ2</accession>
<organism>
    <name type="scientific">Caldicellulosiruptor saccharolyticus (strain ATCC 43494 / DSM 8903 / Tp8T 6331)</name>
    <dbReference type="NCBI Taxonomy" id="351627"/>
    <lineage>
        <taxon>Bacteria</taxon>
        <taxon>Bacillati</taxon>
        <taxon>Bacillota</taxon>
        <taxon>Bacillota incertae sedis</taxon>
        <taxon>Caldicellulosiruptorales</taxon>
        <taxon>Caldicellulosiruptoraceae</taxon>
        <taxon>Caldicellulosiruptor</taxon>
    </lineage>
</organism>
<evidence type="ECO:0000255" key="1">
    <source>
        <dbReference type="HAMAP-Rule" id="MF_00059"/>
    </source>
</evidence>
<feature type="chain" id="PRO_1000007681" description="DNA-directed RNA polymerase subunit alpha">
    <location>
        <begin position="1"/>
        <end position="324"/>
    </location>
</feature>
<feature type="region of interest" description="Alpha N-terminal domain (alpha-NTD)" evidence="1">
    <location>
        <begin position="1"/>
        <end position="228"/>
    </location>
</feature>
<feature type="region of interest" description="Alpha C-terminal domain (alpha-CTD)" evidence="1">
    <location>
        <begin position="245"/>
        <end position="324"/>
    </location>
</feature>
<protein>
    <recommendedName>
        <fullName evidence="1">DNA-directed RNA polymerase subunit alpha</fullName>
        <shortName evidence="1">RNAP subunit alpha</shortName>
        <ecNumber evidence="1">2.7.7.6</ecNumber>
    </recommendedName>
    <alternativeName>
        <fullName evidence="1">RNA polymerase subunit alpha</fullName>
    </alternativeName>
    <alternativeName>
        <fullName evidence="1">Transcriptase subunit alpha</fullName>
    </alternativeName>
</protein>
<reference key="1">
    <citation type="submission" date="2007-04" db="EMBL/GenBank/DDBJ databases">
        <title>Genome sequence of the thermophilic hydrogen-producing bacterium Caldicellulosiruptor saccharolyticus DSM 8903.</title>
        <authorList>
            <person name="Copeland A."/>
            <person name="Lucas S."/>
            <person name="Lapidus A."/>
            <person name="Barry K."/>
            <person name="Detter J.C."/>
            <person name="Glavina del Rio T."/>
            <person name="Hammon N."/>
            <person name="Israni S."/>
            <person name="Dalin E."/>
            <person name="Tice H."/>
            <person name="Pitluck S."/>
            <person name="Kiss H."/>
            <person name="Brettin T."/>
            <person name="Bruce D."/>
            <person name="Han C."/>
            <person name="Schmutz J."/>
            <person name="Larimer F."/>
            <person name="Land M."/>
            <person name="Hauser L."/>
            <person name="Kyrpides N."/>
            <person name="Lykidis A."/>
            <person name="van de Werken H.J.G."/>
            <person name="Verhaart M.R.A."/>
            <person name="VanFossen A.L."/>
            <person name="Lewis D.L."/>
            <person name="Nichols J.D."/>
            <person name="Goorissen H.P."/>
            <person name="van Niel E.W.J."/>
            <person name="Stams F.J.M."/>
            <person name="Willquist K.U."/>
            <person name="Ward D.E."/>
            <person name="van der Oost J."/>
            <person name="Kelly R.M."/>
            <person name="Kengen S.M.W."/>
            <person name="Richardson P."/>
        </authorList>
    </citation>
    <scope>NUCLEOTIDE SEQUENCE [LARGE SCALE GENOMIC DNA]</scope>
    <source>
        <strain>ATCC 43494 / DSM 8903 / Tp8T 6331</strain>
    </source>
</reference>
<sequence>MIEIQKPTIRCEELSQDQKYGRYVIEPLERGYGITIGNALRRTLLSSLPGAAVTAVKIDGVLHEFSTIPGVLEDVPEIILNLKGLAIKMSSPGPKVMYIEAQGECEVKAKDIKADADIEICNPEHHIATLNEDARLFMEITVNQGKGYVPAERNKQSNQPIGVIPVDSIYTPVTKVNYKVENTRVGQVTDYDKLTMEIWTNGTIRPDEALTVAAKILIEHFNLFTDLSNIPTKIETVVKQEPPKRNKLLDMTIEELELSVRSYNCLKRAGINTVEDLVNKTEEEMMKVRNLGKKSLEEVIQKLHSLGLSLKKSDSTPKGEEEEK</sequence>
<comment type="function">
    <text evidence="1">DNA-dependent RNA polymerase catalyzes the transcription of DNA into RNA using the four ribonucleoside triphosphates as substrates.</text>
</comment>
<comment type="catalytic activity">
    <reaction evidence="1">
        <text>RNA(n) + a ribonucleoside 5'-triphosphate = RNA(n+1) + diphosphate</text>
        <dbReference type="Rhea" id="RHEA:21248"/>
        <dbReference type="Rhea" id="RHEA-COMP:14527"/>
        <dbReference type="Rhea" id="RHEA-COMP:17342"/>
        <dbReference type="ChEBI" id="CHEBI:33019"/>
        <dbReference type="ChEBI" id="CHEBI:61557"/>
        <dbReference type="ChEBI" id="CHEBI:140395"/>
        <dbReference type="EC" id="2.7.7.6"/>
    </reaction>
</comment>
<comment type="subunit">
    <text evidence="1">Homodimer. The RNAP catalytic core consists of 2 alpha, 1 beta, 1 beta' and 1 omega subunit. When a sigma factor is associated with the core the holoenzyme is formed, which can initiate transcription.</text>
</comment>
<comment type="domain">
    <text evidence="1">The N-terminal domain is essential for RNAP assembly and basal transcription, whereas the C-terminal domain is involved in interaction with transcriptional regulators and with upstream promoter elements.</text>
</comment>
<comment type="similarity">
    <text evidence="1">Belongs to the RNA polymerase alpha chain family.</text>
</comment>
<dbReference type="EC" id="2.7.7.6" evidence="1"/>
<dbReference type="EMBL" id="CP000679">
    <property type="protein sequence ID" value="ABP67837.1"/>
    <property type="molecule type" value="Genomic_DNA"/>
</dbReference>
<dbReference type="RefSeq" id="WP_011917763.1">
    <property type="nucleotide sequence ID" value="NC_009437.1"/>
</dbReference>
<dbReference type="SMR" id="A4XLQ2"/>
<dbReference type="STRING" id="351627.Csac_2259"/>
<dbReference type="KEGG" id="csc:Csac_2259"/>
<dbReference type="eggNOG" id="COG0202">
    <property type="taxonomic scope" value="Bacteria"/>
</dbReference>
<dbReference type="HOGENOM" id="CLU_053084_0_1_9"/>
<dbReference type="OrthoDB" id="9805706at2"/>
<dbReference type="Proteomes" id="UP000000256">
    <property type="component" value="Chromosome"/>
</dbReference>
<dbReference type="GO" id="GO:0005737">
    <property type="term" value="C:cytoplasm"/>
    <property type="evidence" value="ECO:0007669"/>
    <property type="project" value="UniProtKB-ARBA"/>
</dbReference>
<dbReference type="GO" id="GO:0000428">
    <property type="term" value="C:DNA-directed RNA polymerase complex"/>
    <property type="evidence" value="ECO:0007669"/>
    <property type="project" value="UniProtKB-KW"/>
</dbReference>
<dbReference type="GO" id="GO:0003677">
    <property type="term" value="F:DNA binding"/>
    <property type="evidence" value="ECO:0007669"/>
    <property type="project" value="UniProtKB-UniRule"/>
</dbReference>
<dbReference type="GO" id="GO:0003899">
    <property type="term" value="F:DNA-directed RNA polymerase activity"/>
    <property type="evidence" value="ECO:0007669"/>
    <property type="project" value="UniProtKB-UniRule"/>
</dbReference>
<dbReference type="GO" id="GO:0046983">
    <property type="term" value="F:protein dimerization activity"/>
    <property type="evidence" value="ECO:0007669"/>
    <property type="project" value="InterPro"/>
</dbReference>
<dbReference type="GO" id="GO:0006351">
    <property type="term" value="P:DNA-templated transcription"/>
    <property type="evidence" value="ECO:0007669"/>
    <property type="project" value="UniProtKB-UniRule"/>
</dbReference>
<dbReference type="CDD" id="cd06928">
    <property type="entry name" value="RNAP_alpha_NTD"/>
    <property type="match status" value="1"/>
</dbReference>
<dbReference type="FunFam" id="1.10.150.20:FF:000001">
    <property type="entry name" value="DNA-directed RNA polymerase subunit alpha"/>
    <property type="match status" value="1"/>
</dbReference>
<dbReference type="FunFam" id="2.170.120.12:FF:000001">
    <property type="entry name" value="DNA-directed RNA polymerase subunit alpha"/>
    <property type="match status" value="1"/>
</dbReference>
<dbReference type="Gene3D" id="1.10.150.20">
    <property type="entry name" value="5' to 3' exonuclease, C-terminal subdomain"/>
    <property type="match status" value="1"/>
</dbReference>
<dbReference type="Gene3D" id="2.170.120.12">
    <property type="entry name" value="DNA-directed RNA polymerase, insert domain"/>
    <property type="match status" value="1"/>
</dbReference>
<dbReference type="Gene3D" id="3.30.1360.10">
    <property type="entry name" value="RNA polymerase, RBP11-like subunit"/>
    <property type="match status" value="1"/>
</dbReference>
<dbReference type="HAMAP" id="MF_00059">
    <property type="entry name" value="RNApol_bact_RpoA"/>
    <property type="match status" value="1"/>
</dbReference>
<dbReference type="InterPro" id="IPR011262">
    <property type="entry name" value="DNA-dir_RNA_pol_insert"/>
</dbReference>
<dbReference type="InterPro" id="IPR011263">
    <property type="entry name" value="DNA-dir_RNA_pol_RpoA/D/Rpb3"/>
</dbReference>
<dbReference type="InterPro" id="IPR011773">
    <property type="entry name" value="DNA-dir_RpoA"/>
</dbReference>
<dbReference type="InterPro" id="IPR036603">
    <property type="entry name" value="RBP11-like"/>
</dbReference>
<dbReference type="InterPro" id="IPR011260">
    <property type="entry name" value="RNAP_asu_C"/>
</dbReference>
<dbReference type="InterPro" id="IPR036643">
    <property type="entry name" value="RNApol_insert_sf"/>
</dbReference>
<dbReference type="NCBIfam" id="NF003513">
    <property type="entry name" value="PRK05182.1-2"/>
    <property type="match status" value="1"/>
</dbReference>
<dbReference type="NCBIfam" id="NF003515">
    <property type="entry name" value="PRK05182.2-1"/>
    <property type="match status" value="1"/>
</dbReference>
<dbReference type="NCBIfam" id="NF003516">
    <property type="entry name" value="PRK05182.2-2"/>
    <property type="match status" value="1"/>
</dbReference>
<dbReference type="NCBIfam" id="NF003519">
    <property type="entry name" value="PRK05182.2-5"/>
    <property type="match status" value="1"/>
</dbReference>
<dbReference type="NCBIfam" id="TIGR02027">
    <property type="entry name" value="rpoA"/>
    <property type="match status" value="1"/>
</dbReference>
<dbReference type="Pfam" id="PF01000">
    <property type="entry name" value="RNA_pol_A_bac"/>
    <property type="match status" value="1"/>
</dbReference>
<dbReference type="Pfam" id="PF03118">
    <property type="entry name" value="RNA_pol_A_CTD"/>
    <property type="match status" value="1"/>
</dbReference>
<dbReference type="Pfam" id="PF01193">
    <property type="entry name" value="RNA_pol_L"/>
    <property type="match status" value="1"/>
</dbReference>
<dbReference type="SMART" id="SM00662">
    <property type="entry name" value="RPOLD"/>
    <property type="match status" value="1"/>
</dbReference>
<dbReference type="SUPFAM" id="SSF47789">
    <property type="entry name" value="C-terminal domain of RNA polymerase alpha subunit"/>
    <property type="match status" value="1"/>
</dbReference>
<dbReference type="SUPFAM" id="SSF56553">
    <property type="entry name" value="Insert subdomain of RNA polymerase alpha subunit"/>
    <property type="match status" value="1"/>
</dbReference>
<dbReference type="SUPFAM" id="SSF55257">
    <property type="entry name" value="RBP11-like subunits of RNA polymerase"/>
    <property type="match status" value="1"/>
</dbReference>
<proteinExistence type="inferred from homology"/>
<gene>
    <name evidence="1" type="primary">rpoA</name>
    <name type="ordered locus">Csac_2259</name>
</gene>